<organism>
    <name type="scientific">Ailuropoda melanoleuca</name>
    <name type="common">Giant panda</name>
    <dbReference type="NCBI Taxonomy" id="9646"/>
    <lineage>
        <taxon>Eukaryota</taxon>
        <taxon>Metazoa</taxon>
        <taxon>Chordata</taxon>
        <taxon>Craniata</taxon>
        <taxon>Vertebrata</taxon>
        <taxon>Euteleostomi</taxon>
        <taxon>Mammalia</taxon>
        <taxon>Eutheria</taxon>
        <taxon>Laurasiatheria</taxon>
        <taxon>Carnivora</taxon>
        <taxon>Caniformia</taxon>
        <taxon>Ursidae</taxon>
        <taxon>Ailuropoda</taxon>
    </lineage>
</organism>
<accession>P18970</accession>
<proteinExistence type="evidence at protein level"/>
<comment type="function">
    <text>Involved in oxygen transport from the lung to the various peripheral tissues.</text>
</comment>
<comment type="function">
    <molecule>Hemopressin</molecule>
    <text evidence="2">Hemopressin acts as an antagonist peptide of the cannabinoid receptor CNR1. Hemopressin-binding efficiently blocks cannabinoid receptor CNR1 and subsequent signaling.</text>
</comment>
<comment type="subunit">
    <text>Heterotetramer of two alpha chains and two beta chains.</text>
</comment>
<comment type="tissue specificity">
    <text>Red blood cells.</text>
</comment>
<comment type="similarity">
    <text evidence="4">Belongs to the globin family.</text>
</comment>
<gene>
    <name type="primary">HBA</name>
</gene>
<sequence>MVLSPADKTNVKATWDKIGGHAGEYGGEALERTFASFPTTKTYFPHFDLSPGSAQVKAHGKKVADALTTAVGHLDDLPGALSALSDLHAHKLRVDPVNFKLLSHCLLVTLASHHPAEFTPAVHASLDKFFSAVSTVLTSKYR</sequence>
<protein>
    <recommendedName>
        <fullName>Hemoglobin subunit alpha</fullName>
    </recommendedName>
    <alternativeName>
        <fullName>Alpha-globin</fullName>
    </alternativeName>
    <alternativeName>
        <fullName>Hemoglobin alpha chain</fullName>
    </alternativeName>
    <component>
        <recommendedName>
            <fullName evidence="2">Hemopressin</fullName>
        </recommendedName>
    </component>
</protein>
<evidence type="ECO:0000250" key="1">
    <source>
        <dbReference type="UniProtKB" id="P01942"/>
    </source>
</evidence>
<evidence type="ECO:0000250" key="2">
    <source>
        <dbReference type="UniProtKB" id="P01946"/>
    </source>
</evidence>
<evidence type="ECO:0000250" key="3">
    <source>
        <dbReference type="UniProtKB" id="P69905"/>
    </source>
</evidence>
<evidence type="ECO:0000255" key="4">
    <source>
        <dbReference type="PROSITE-ProRule" id="PRU00238"/>
    </source>
</evidence>
<evidence type="ECO:0000269" key="5">
    <source>
    </source>
</evidence>
<name>HBA_AILME</name>
<feature type="initiator methionine" description="Removed" evidence="5">
    <location>
        <position position="1"/>
    </location>
</feature>
<feature type="chain" id="PRO_0000052537" description="Hemoglobin subunit alpha">
    <location>
        <begin position="2"/>
        <end position="142"/>
    </location>
</feature>
<feature type="peptide" id="PRO_0000455836" description="Hemopressin" evidence="2">
    <location>
        <begin position="96"/>
        <end position="104"/>
    </location>
</feature>
<feature type="domain" description="Globin" evidence="4">
    <location>
        <begin position="2"/>
        <end position="142"/>
    </location>
</feature>
<feature type="binding site" evidence="4">
    <location>
        <position position="59"/>
    </location>
    <ligand>
        <name>O2</name>
        <dbReference type="ChEBI" id="CHEBI:15379"/>
    </ligand>
</feature>
<feature type="binding site" description="proximal binding residue" evidence="4">
    <location>
        <position position="88"/>
    </location>
    <ligand>
        <name>heme b</name>
        <dbReference type="ChEBI" id="CHEBI:60344"/>
    </ligand>
    <ligandPart>
        <name>Fe</name>
        <dbReference type="ChEBI" id="CHEBI:18248"/>
    </ligandPart>
</feature>
<feature type="modified residue" description="Phosphoserine" evidence="3">
    <location>
        <position position="4"/>
    </location>
</feature>
<feature type="modified residue" description="N6-succinyllysine" evidence="1">
    <location>
        <position position="8"/>
    </location>
</feature>
<feature type="modified residue" description="Phosphothreonine" evidence="3">
    <location>
        <position position="9"/>
    </location>
</feature>
<feature type="modified residue" description="N6-succinyllysine" evidence="1">
    <location>
        <position position="12"/>
    </location>
</feature>
<feature type="modified residue" description="N6-acetyllysine; alternate" evidence="3">
    <location>
        <position position="17"/>
    </location>
</feature>
<feature type="modified residue" description="N6-succinyllysine; alternate" evidence="1">
    <location>
        <position position="17"/>
    </location>
</feature>
<feature type="modified residue" description="Phosphotyrosine" evidence="3">
    <location>
        <position position="25"/>
    </location>
</feature>
<feature type="modified residue" description="Phosphoserine" evidence="3">
    <location>
        <position position="36"/>
    </location>
</feature>
<feature type="modified residue" description="N6-succinyllysine" evidence="1">
    <location>
        <position position="41"/>
    </location>
</feature>
<feature type="modified residue" description="Phosphoserine" evidence="3">
    <location>
        <position position="50"/>
    </location>
</feature>
<feature type="modified residue" description="Phosphoserine" evidence="1">
    <location>
        <position position="103"/>
    </location>
</feature>
<feature type="modified residue" description="Phosphothreonine" evidence="1">
    <location>
        <position position="109"/>
    </location>
</feature>
<feature type="modified residue" description="Phosphoserine" evidence="1">
    <location>
        <position position="125"/>
    </location>
</feature>
<feature type="modified residue" description="Phosphothreonine" evidence="1">
    <location>
        <position position="135"/>
    </location>
</feature>
<feature type="modified residue" description="Phosphothreonine" evidence="1">
    <location>
        <position position="138"/>
    </location>
</feature>
<feature type="modified residue" description="Phosphoserine" evidence="1">
    <location>
        <position position="139"/>
    </location>
</feature>
<keyword id="KW-0007">Acetylation</keyword>
<keyword id="KW-0903">Direct protein sequencing</keyword>
<keyword id="KW-0349">Heme</keyword>
<keyword id="KW-0408">Iron</keyword>
<keyword id="KW-0479">Metal-binding</keyword>
<keyword id="KW-0561">Oxygen transport</keyword>
<keyword id="KW-0597">Phosphoprotein</keyword>
<keyword id="KW-1185">Reference proteome</keyword>
<keyword id="KW-0813">Transport</keyword>
<reference key="1">
    <citation type="journal article" date="1986" name="Naturwissenschaften">
        <title>Hemoglobin of pandas: phylogenetic relationships of carnivores as ascertained with protein sequence data.</title>
        <authorList>
            <person name="Tagle D.A."/>
            <person name="Miyamoto M.M."/>
            <person name="Goodman M."/>
            <person name="Hofmann O."/>
            <person name="Braunitzer G."/>
            <person name="Goeltenboth R."/>
            <person name="Jalanka H."/>
        </authorList>
    </citation>
    <scope>PROTEIN SEQUENCE OF 2-142</scope>
</reference>
<dbReference type="PIR" id="S06528">
    <property type="entry name" value="HAFQG"/>
</dbReference>
<dbReference type="RefSeq" id="XP_002920201.1">
    <property type="nucleotide sequence ID" value="XM_002920155.3"/>
</dbReference>
<dbReference type="SMR" id="P18970"/>
<dbReference type="FunCoup" id="P18970">
    <property type="interactions" value="1"/>
</dbReference>
<dbReference type="STRING" id="9646.ENSAMEP00000007250"/>
<dbReference type="Ensembl" id="ENSAMET00000007556.2">
    <property type="protein sequence ID" value="ENSAMEP00000007250.1"/>
    <property type="gene ID" value="ENSAMEG00000006871.2"/>
</dbReference>
<dbReference type="GeneID" id="100472013"/>
<dbReference type="KEGG" id="aml:100472013"/>
<dbReference type="eggNOG" id="KOG3378">
    <property type="taxonomic scope" value="Eukaryota"/>
</dbReference>
<dbReference type="GeneTree" id="ENSGT00940000154590"/>
<dbReference type="HOGENOM" id="CLU_003827_10_2_1"/>
<dbReference type="InParanoid" id="P18970"/>
<dbReference type="OMA" id="MFTSFPT"/>
<dbReference type="OrthoDB" id="8751793at2759"/>
<dbReference type="TreeFam" id="TF332328"/>
<dbReference type="Proteomes" id="UP000008912">
    <property type="component" value="Unassembled WGS sequence"/>
</dbReference>
<dbReference type="GO" id="GO:0072562">
    <property type="term" value="C:blood microparticle"/>
    <property type="evidence" value="ECO:0007669"/>
    <property type="project" value="TreeGrafter"/>
</dbReference>
<dbReference type="GO" id="GO:0031838">
    <property type="term" value="C:haptoglobin-hemoglobin complex"/>
    <property type="evidence" value="ECO:0007669"/>
    <property type="project" value="TreeGrafter"/>
</dbReference>
<dbReference type="GO" id="GO:0005833">
    <property type="term" value="C:hemoglobin complex"/>
    <property type="evidence" value="ECO:0007669"/>
    <property type="project" value="InterPro"/>
</dbReference>
<dbReference type="GO" id="GO:0031720">
    <property type="term" value="F:haptoglobin binding"/>
    <property type="evidence" value="ECO:0007669"/>
    <property type="project" value="TreeGrafter"/>
</dbReference>
<dbReference type="GO" id="GO:0020037">
    <property type="term" value="F:heme binding"/>
    <property type="evidence" value="ECO:0007669"/>
    <property type="project" value="InterPro"/>
</dbReference>
<dbReference type="GO" id="GO:0005506">
    <property type="term" value="F:iron ion binding"/>
    <property type="evidence" value="ECO:0007669"/>
    <property type="project" value="InterPro"/>
</dbReference>
<dbReference type="GO" id="GO:0043177">
    <property type="term" value="F:organic acid binding"/>
    <property type="evidence" value="ECO:0007669"/>
    <property type="project" value="TreeGrafter"/>
</dbReference>
<dbReference type="GO" id="GO:0019825">
    <property type="term" value="F:oxygen binding"/>
    <property type="evidence" value="ECO:0007669"/>
    <property type="project" value="InterPro"/>
</dbReference>
<dbReference type="GO" id="GO:0005344">
    <property type="term" value="F:oxygen carrier activity"/>
    <property type="evidence" value="ECO:0007669"/>
    <property type="project" value="UniProtKB-KW"/>
</dbReference>
<dbReference type="GO" id="GO:0004601">
    <property type="term" value="F:peroxidase activity"/>
    <property type="evidence" value="ECO:0007669"/>
    <property type="project" value="TreeGrafter"/>
</dbReference>
<dbReference type="GO" id="GO:0042744">
    <property type="term" value="P:hydrogen peroxide catabolic process"/>
    <property type="evidence" value="ECO:0007669"/>
    <property type="project" value="TreeGrafter"/>
</dbReference>
<dbReference type="CDD" id="cd08927">
    <property type="entry name" value="Hb-alpha-like"/>
    <property type="match status" value="1"/>
</dbReference>
<dbReference type="FunFam" id="1.10.490.10:FF:000002">
    <property type="entry name" value="Hemoglobin subunit alpha"/>
    <property type="match status" value="1"/>
</dbReference>
<dbReference type="Gene3D" id="1.10.490.10">
    <property type="entry name" value="Globins"/>
    <property type="match status" value="1"/>
</dbReference>
<dbReference type="InterPro" id="IPR000971">
    <property type="entry name" value="Globin"/>
</dbReference>
<dbReference type="InterPro" id="IPR009050">
    <property type="entry name" value="Globin-like_sf"/>
</dbReference>
<dbReference type="InterPro" id="IPR012292">
    <property type="entry name" value="Globin/Proto"/>
</dbReference>
<dbReference type="InterPro" id="IPR002338">
    <property type="entry name" value="Hemoglobin_a-typ"/>
</dbReference>
<dbReference type="InterPro" id="IPR050056">
    <property type="entry name" value="Hemoglobin_oxygen_transport"/>
</dbReference>
<dbReference type="InterPro" id="IPR002339">
    <property type="entry name" value="Hemoglobin_pi"/>
</dbReference>
<dbReference type="PANTHER" id="PTHR11442">
    <property type="entry name" value="HEMOGLOBIN FAMILY MEMBER"/>
    <property type="match status" value="1"/>
</dbReference>
<dbReference type="PANTHER" id="PTHR11442:SF48">
    <property type="entry name" value="HEMOGLOBIN SUBUNIT ALPHA"/>
    <property type="match status" value="1"/>
</dbReference>
<dbReference type="Pfam" id="PF00042">
    <property type="entry name" value="Globin"/>
    <property type="match status" value="1"/>
</dbReference>
<dbReference type="PRINTS" id="PR00612">
    <property type="entry name" value="ALPHAHAEM"/>
</dbReference>
<dbReference type="PRINTS" id="PR00815">
    <property type="entry name" value="PIHAEM"/>
</dbReference>
<dbReference type="SUPFAM" id="SSF46458">
    <property type="entry name" value="Globin-like"/>
    <property type="match status" value="1"/>
</dbReference>
<dbReference type="PROSITE" id="PS01033">
    <property type="entry name" value="GLOBIN"/>
    <property type="match status" value="1"/>
</dbReference>